<reference key="1">
    <citation type="journal article" date="1997" name="Microbiology">
        <title>Sequence of the Bacillus subtilis genome region in the vicinity of the lev operon reveals two new extracytoplasmic function RNA polymerase sigma factors SigV and SigZ.</title>
        <authorList>
            <person name="Sorokin A."/>
            <person name="Bolotin A."/>
            <person name="Purnelle B."/>
            <person name="Hilbert H."/>
            <person name="Lauber J."/>
            <person name="Duesterhoeft A."/>
            <person name="Ehrlich S.D."/>
        </authorList>
    </citation>
    <scope>NUCLEOTIDE SEQUENCE [GENOMIC DNA]</scope>
    <source>
        <strain>168</strain>
    </source>
</reference>
<reference key="2">
    <citation type="journal article" date="1997" name="Nature">
        <title>The complete genome sequence of the Gram-positive bacterium Bacillus subtilis.</title>
        <authorList>
            <person name="Kunst F."/>
            <person name="Ogasawara N."/>
            <person name="Moszer I."/>
            <person name="Albertini A.M."/>
            <person name="Alloni G."/>
            <person name="Azevedo V."/>
            <person name="Bertero M.G."/>
            <person name="Bessieres P."/>
            <person name="Bolotin A."/>
            <person name="Borchert S."/>
            <person name="Borriss R."/>
            <person name="Boursier L."/>
            <person name="Brans A."/>
            <person name="Braun M."/>
            <person name="Brignell S.C."/>
            <person name="Bron S."/>
            <person name="Brouillet S."/>
            <person name="Bruschi C.V."/>
            <person name="Caldwell B."/>
            <person name="Capuano V."/>
            <person name="Carter N.M."/>
            <person name="Choi S.-K."/>
            <person name="Codani J.-J."/>
            <person name="Connerton I.F."/>
            <person name="Cummings N.J."/>
            <person name="Daniel R.A."/>
            <person name="Denizot F."/>
            <person name="Devine K.M."/>
            <person name="Duesterhoeft A."/>
            <person name="Ehrlich S.D."/>
            <person name="Emmerson P.T."/>
            <person name="Entian K.-D."/>
            <person name="Errington J."/>
            <person name="Fabret C."/>
            <person name="Ferrari E."/>
            <person name="Foulger D."/>
            <person name="Fritz C."/>
            <person name="Fujita M."/>
            <person name="Fujita Y."/>
            <person name="Fuma S."/>
            <person name="Galizzi A."/>
            <person name="Galleron N."/>
            <person name="Ghim S.-Y."/>
            <person name="Glaser P."/>
            <person name="Goffeau A."/>
            <person name="Golightly E.J."/>
            <person name="Grandi G."/>
            <person name="Guiseppi G."/>
            <person name="Guy B.J."/>
            <person name="Haga K."/>
            <person name="Haiech J."/>
            <person name="Harwood C.R."/>
            <person name="Henaut A."/>
            <person name="Hilbert H."/>
            <person name="Holsappel S."/>
            <person name="Hosono S."/>
            <person name="Hullo M.-F."/>
            <person name="Itaya M."/>
            <person name="Jones L.-M."/>
            <person name="Joris B."/>
            <person name="Karamata D."/>
            <person name="Kasahara Y."/>
            <person name="Klaerr-Blanchard M."/>
            <person name="Klein C."/>
            <person name="Kobayashi Y."/>
            <person name="Koetter P."/>
            <person name="Koningstein G."/>
            <person name="Krogh S."/>
            <person name="Kumano M."/>
            <person name="Kurita K."/>
            <person name="Lapidus A."/>
            <person name="Lardinois S."/>
            <person name="Lauber J."/>
            <person name="Lazarevic V."/>
            <person name="Lee S.-M."/>
            <person name="Levine A."/>
            <person name="Liu H."/>
            <person name="Masuda S."/>
            <person name="Mauel C."/>
            <person name="Medigue C."/>
            <person name="Medina N."/>
            <person name="Mellado R.P."/>
            <person name="Mizuno M."/>
            <person name="Moestl D."/>
            <person name="Nakai S."/>
            <person name="Noback M."/>
            <person name="Noone D."/>
            <person name="O'Reilly M."/>
            <person name="Ogawa K."/>
            <person name="Ogiwara A."/>
            <person name="Oudega B."/>
            <person name="Park S.-H."/>
            <person name="Parro V."/>
            <person name="Pohl T.M."/>
            <person name="Portetelle D."/>
            <person name="Porwollik S."/>
            <person name="Prescott A.M."/>
            <person name="Presecan E."/>
            <person name="Pujic P."/>
            <person name="Purnelle B."/>
            <person name="Rapoport G."/>
            <person name="Rey M."/>
            <person name="Reynolds S."/>
            <person name="Rieger M."/>
            <person name="Rivolta C."/>
            <person name="Rocha E."/>
            <person name="Roche B."/>
            <person name="Rose M."/>
            <person name="Sadaie Y."/>
            <person name="Sato T."/>
            <person name="Scanlan E."/>
            <person name="Schleich S."/>
            <person name="Schroeter R."/>
            <person name="Scoffone F."/>
            <person name="Sekiguchi J."/>
            <person name="Sekowska A."/>
            <person name="Seror S.J."/>
            <person name="Serror P."/>
            <person name="Shin B.-S."/>
            <person name="Soldo B."/>
            <person name="Sorokin A."/>
            <person name="Tacconi E."/>
            <person name="Takagi T."/>
            <person name="Takahashi H."/>
            <person name="Takemaru K."/>
            <person name="Takeuchi M."/>
            <person name="Tamakoshi A."/>
            <person name="Tanaka T."/>
            <person name="Terpstra P."/>
            <person name="Tognoni A."/>
            <person name="Tosato V."/>
            <person name="Uchiyama S."/>
            <person name="Vandenbol M."/>
            <person name="Vannier F."/>
            <person name="Vassarotti A."/>
            <person name="Viari A."/>
            <person name="Wambutt R."/>
            <person name="Wedler E."/>
            <person name="Wedler H."/>
            <person name="Weitzenegger T."/>
            <person name="Winters P."/>
            <person name="Wipat A."/>
            <person name="Yamamoto H."/>
            <person name="Yamane K."/>
            <person name="Yasumoto K."/>
            <person name="Yata K."/>
            <person name="Yoshida K."/>
            <person name="Yoshikawa H.-F."/>
            <person name="Zumstein E."/>
            <person name="Yoshikawa H."/>
            <person name="Danchin A."/>
        </authorList>
    </citation>
    <scope>NUCLEOTIDE SEQUENCE [LARGE SCALE GENOMIC DNA]</scope>
    <source>
        <strain>168</strain>
    </source>
</reference>
<name>YRHF_BACSU</name>
<sequence>MSKKIHEFNDIIRKLRKELFGKGPERIHTVFVENMAVSTLYGNLSASEQFIARTPEGREMVHAARTSLIQDLYSKQTPEGMEELMGAKLVHLFSDIKIEENIAVSVFVFDRKIDEQKEALQS</sequence>
<accession>O05398</accession>
<protein>
    <recommendedName>
        <fullName>Uncharacterized protein YrhF</fullName>
    </recommendedName>
</protein>
<gene>
    <name type="primary">yrhF</name>
    <name type="ordered locus">BSU27210</name>
</gene>
<dbReference type="EMBL" id="U93874">
    <property type="protein sequence ID" value="AAB80863.1"/>
    <property type="molecule type" value="Genomic_DNA"/>
</dbReference>
<dbReference type="EMBL" id="AL009126">
    <property type="protein sequence ID" value="CAB14663.1"/>
    <property type="molecule type" value="Genomic_DNA"/>
</dbReference>
<dbReference type="PIR" id="E69974">
    <property type="entry name" value="E69974"/>
</dbReference>
<dbReference type="RefSeq" id="NP_390599.1">
    <property type="nucleotide sequence ID" value="NC_000964.3"/>
</dbReference>
<dbReference type="RefSeq" id="WP_004398508.1">
    <property type="nucleotide sequence ID" value="NZ_OZ025638.1"/>
</dbReference>
<dbReference type="FunCoup" id="O05398">
    <property type="interactions" value="75"/>
</dbReference>
<dbReference type="STRING" id="224308.BSU27210"/>
<dbReference type="PaxDb" id="224308-BSU27210"/>
<dbReference type="EnsemblBacteria" id="CAB14663">
    <property type="protein sequence ID" value="CAB14663"/>
    <property type="gene ID" value="BSU_27210"/>
</dbReference>
<dbReference type="GeneID" id="936371"/>
<dbReference type="KEGG" id="bsu:BSU27210"/>
<dbReference type="PATRIC" id="fig|224308.179.peg.2957"/>
<dbReference type="eggNOG" id="COG5609">
    <property type="taxonomic scope" value="Bacteria"/>
</dbReference>
<dbReference type="InParanoid" id="O05398"/>
<dbReference type="OrthoDB" id="2375124at2"/>
<dbReference type="BioCyc" id="BSUB:BSU27210-MONOMER"/>
<dbReference type="Proteomes" id="UP000001570">
    <property type="component" value="Chromosome"/>
</dbReference>
<dbReference type="InterPro" id="IPR018745">
    <property type="entry name" value="MpsC"/>
</dbReference>
<dbReference type="Pfam" id="PF10057">
    <property type="entry name" value="MpsC"/>
    <property type="match status" value="1"/>
</dbReference>
<organism>
    <name type="scientific">Bacillus subtilis (strain 168)</name>
    <dbReference type="NCBI Taxonomy" id="224308"/>
    <lineage>
        <taxon>Bacteria</taxon>
        <taxon>Bacillati</taxon>
        <taxon>Bacillota</taxon>
        <taxon>Bacilli</taxon>
        <taxon>Bacillales</taxon>
        <taxon>Bacillaceae</taxon>
        <taxon>Bacillus</taxon>
    </lineage>
</organism>
<feature type="chain" id="PRO_0000049866" description="Uncharacterized protein YrhF">
    <location>
        <begin position="1"/>
        <end position="122"/>
    </location>
</feature>
<keyword id="KW-1185">Reference proteome</keyword>
<proteinExistence type="predicted"/>